<proteinExistence type="inferred from homology"/>
<evidence type="ECO:0000255" key="1">
    <source>
        <dbReference type="HAMAP-Rule" id="MF_01326"/>
    </source>
</evidence>
<evidence type="ECO:0000305" key="2"/>
<protein>
    <recommendedName>
        <fullName evidence="1">Large ribosomal subunit protein uL24</fullName>
    </recommendedName>
    <alternativeName>
        <fullName evidence="2">50S ribosomal protein L24</fullName>
    </alternativeName>
</protein>
<accession>Q3MFB0</accession>
<sequence length="117" mass="12879">MPSKKDTTPKFHKLHVKTGDTVQVIAGKDKGKVGEVIKALPQLSKVIVKGVNIKTKHVKPQQEGESGRIVTQEAPIHSSNVMLYSTKQNVASRVCYTFTAEGKKVRKLKKTGEILDN</sequence>
<organism>
    <name type="scientific">Trichormus variabilis (strain ATCC 29413 / PCC 7937)</name>
    <name type="common">Anabaena variabilis</name>
    <dbReference type="NCBI Taxonomy" id="240292"/>
    <lineage>
        <taxon>Bacteria</taxon>
        <taxon>Bacillati</taxon>
        <taxon>Cyanobacteriota</taxon>
        <taxon>Cyanophyceae</taxon>
        <taxon>Nostocales</taxon>
        <taxon>Nostocaceae</taxon>
        <taxon>Trichormus</taxon>
    </lineage>
</organism>
<comment type="function">
    <text evidence="1">One of two assembly initiator proteins, it binds directly to the 5'-end of the 23S rRNA, where it nucleates assembly of the 50S subunit.</text>
</comment>
<comment type="function">
    <text evidence="1">One of the proteins that surrounds the polypeptide exit tunnel on the outside of the subunit.</text>
</comment>
<comment type="subunit">
    <text evidence="1">Part of the 50S ribosomal subunit.</text>
</comment>
<comment type="similarity">
    <text evidence="1">Belongs to the universal ribosomal protein uL24 family.</text>
</comment>
<reference key="1">
    <citation type="journal article" date="2014" name="Stand. Genomic Sci.">
        <title>Complete genome sequence of Anabaena variabilis ATCC 29413.</title>
        <authorList>
            <person name="Thiel T."/>
            <person name="Pratte B.S."/>
            <person name="Zhong J."/>
            <person name="Goodwin L."/>
            <person name="Copeland A."/>
            <person name="Lucas S."/>
            <person name="Han C."/>
            <person name="Pitluck S."/>
            <person name="Land M.L."/>
            <person name="Kyrpides N.C."/>
            <person name="Woyke T."/>
        </authorList>
    </citation>
    <scope>NUCLEOTIDE SEQUENCE [LARGE SCALE GENOMIC DNA]</scope>
    <source>
        <strain>ATCC 29413 / PCC 7937</strain>
    </source>
</reference>
<name>RL24_TRIV2</name>
<keyword id="KW-0687">Ribonucleoprotein</keyword>
<keyword id="KW-0689">Ribosomal protein</keyword>
<keyword id="KW-0694">RNA-binding</keyword>
<keyword id="KW-0699">rRNA-binding</keyword>
<feature type="chain" id="PRO_0000241556" description="Large ribosomal subunit protein uL24">
    <location>
        <begin position="1"/>
        <end position="117"/>
    </location>
</feature>
<gene>
    <name evidence="1" type="primary">rplX</name>
    <name evidence="1" type="synonym">rpl24</name>
    <name type="ordered locus">Ava_0702</name>
</gene>
<dbReference type="EMBL" id="CP000117">
    <property type="protein sequence ID" value="ABA20326.1"/>
    <property type="molecule type" value="Genomic_DNA"/>
</dbReference>
<dbReference type="SMR" id="Q3MFB0"/>
<dbReference type="STRING" id="240292.Ava_0702"/>
<dbReference type="KEGG" id="ava:Ava_0702"/>
<dbReference type="eggNOG" id="COG0198">
    <property type="taxonomic scope" value="Bacteria"/>
</dbReference>
<dbReference type="HOGENOM" id="CLU_093315_2_0_3"/>
<dbReference type="Proteomes" id="UP000002533">
    <property type="component" value="Chromosome"/>
</dbReference>
<dbReference type="GO" id="GO:1990904">
    <property type="term" value="C:ribonucleoprotein complex"/>
    <property type="evidence" value="ECO:0007669"/>
    <property type="project" value="UniProtKB-KW"/>
</dbReference>
<dbReference type="GO" id="GO:0005840">
    <property type="term" value="C:ribosome"/>
    <property type="evidence" value="ECO:0007669"/>
    <property type="project" value="UniProtKB-KW"/>
</dbReference>
<dbReference type="GO" id="GO:0019843">
    <property type="term" value="F:rRNA binding"/>
    <property type="evidence" value="ECO:0007669"/>
    <property type="project" value="UniProtKB-UniRule"/>
</dbReference>
<dbReference type="GO" id="GO:0003735">
    <property type="term" value="F:structural constituent of ribosome"/>
    <property type="evidence" value="ECO:0007669"/>
    <property type="project" value="InterPro"/>
</dbReference>
<dbReference type="GO" id="GO:0006412">
    <property type="term" value="P:translation"/>
    <property type="evidence" value="ECO:0007669"/>
    <property type="project" value="UniProtKB-UniRule"/>
</dbReference>
<dbReference type="CDD" id="cd06089">
    <property type="entry name" value="KOW_RPL26"/>
    <property type="match status" value="1"/>
</dbReference>
<dbReference type="FunFam" id="2.30.30.30:FF:000004">
    <property type="entry name" value="50S ribosomal protein L24"/>
    <property type="match status" value="1"/>
</dbReference>
<dbReference type="Gene3D" id="2.30.30.30">
    <property type="match status" value="1"/>
</dbReference>
<dbReference type="HAMAP" id="MF_01326_B">
    <property type="entry name" value="Ribosomal_uL24_B"/>
    <property type="match status" value="1"/>
</dbReference>
<dbReference type="InterPro" id="IPR005824">
    <property type="entry name" value="KOW"/>
</dbReference>
<dbReference type="InterPro" id="IPR014722">
    <property type="entry name" value="Rib_uL2_dom2"/>
</dbReference>
<dbReference type="InterPro" id="IPR003256">
    <property type="entry name" value="Ribosomal_uL24"/>
</dbReference>
<dbReference type="InterPro" id="IPR005825">
    <property type="entry name" value="Ribosomal_uL24_CS"/>
</dbReference>
<dbReference type="InterPro" id="IPR041988">
    <property type="entry name" value="Ribosomal_uL24_KOW"/>
</dbReference>
<dbReference type="InterPro" id="IPR008991">
    <property type="entry name" value="Translation_prot_SH3-like_sf"/>
</dbReference>
<dbReference type="NCBIfam" id="TIGR01079">
    <property type="entry name" value="rplX_bact"/>
    <property type="match status" value="1"/>
</dbReference>
<dbReference type="PANTHER" id="PTHR12903">
    <property type="entry name" value="MITOCHONDRIAL RIBOSOMAL PROTEIN L24"/>
    <property type="match status" value="1"/>
</dbReference>
<dbReference type="Pfam" id="PF00467">
    <property type="entry name" value="KOW"/>
    <property type="match status" value="1"/>
</dbReference>
<dbReference type="Pfam" id="PF17136">
    <property type="entry name" value="ribosomal_L24"/>
    <property type="match status" value="1"/>
</dbReference>
<dbReference type="SMART" id="SM00739">
    <property type="entry name" value="KOW"/>
    <property type="match status" value="1"/>
</dbReference>
<dbReference type="SUPFAM" id="SSF50104">
    <property type="entry name" value="Translation proteins SH3-like domain"/>
    <property type="match status" value="1"/>
</dbReference>
<dbReference type="PROSITE" id="PS01108">
    <property type="entry name" value="RIBOSOMAL_L24"/>
    <property type="match status" value="1"/>
</dbReference>